<proteinExistence type="inferred from homology"/>
<sequence>MTNTVLEWMVEDAQRLAECRHDHPFAVLGPQPQEDGTWVLRAWMPEAEGVTLLLGDQEMGMSTPHHPWIFEASVAHDPGCAYRLRVHRGGITHEQHDPWAFRQDWMGEMDRHLFAEGNHHHIWRRMGAHHCEREGIPGVMFCLWAPHARSVSVIGDLNSWDGRHHPMQQRLGGIWELFVPGLAEGQLYKYEIRTQEGHCYQKADPYGFQHEVRPDTSSVVSHLDGFHWTDTDWIQKRDSSNPLDQPIAVYEMHLGSWIHAAADEPFIEADGTPRAPVPAADLKPGARLLTYPELADRLIPYVKERGFTHIELMPITEHPFDGSWGYQVTGWYAPTSRYGTPDEFRAFVDRCHAEGIGVIIDWVPGHFPRDSHGLAFFDGCHLYEHADPRIGEHKEWGTLIFNYSRNEVRNFLVANLVFWFDQFHIDGIRVDAVASMLYRDYLRPDGEWLPNEHGGRENTEAVQFLQQANHVLFQHFPGALSIAEESTTWPMVTQPTDIGGLGFNLKWNMGWMHDMLDYFELDPWFRQFHQNNITFSIWYTYTENFMLALSHDEVVHGKSNLLHKMPGDDWQKYANTRALLAYMWTHPGKKTIFMGMEFGQRAEWNVWGDLQWDLLNYEPHQGVQRMVDDLNGLYKSEPALWRDDFDQYGFQWIDCNDNRHSVISFMRRESTSGTWLVVVANFTPQSHSHYRVGVPLAGYYEEIFNTDASKYGGSNLGNMGGKPTEEWGIHGYENSLDLCLPPLSLMVFKHDPKKSLNPVQE</sequence>
<feature type="chain" id="PRO_1000045004" description="1,4-alpha-glucan branching enzyme GlgB">
    <location>
        <begin position="1"/>
        <end position="761"/>
    </location>
</feature>
<feature type="active site" description="Nucleophile" evidence="1">
    <location>
        <position position="431"/>
    </location>
</feature>
<feature type="active site" description="Proton donor" evidence="1">
    <location>
        <position position="484"/>
    </location>
</feature>
<keyword id="KW-0119">Carbohydrate metabolism</keyword>
<keyword id="KW-0320">Glycogen biosynthesis</keyword>
<keyword id="KW-0321">Glycogen metabolism</keyword>
<keyword id="KW-0328">Glycosyltransferase</keyword>
<keyword id="KW-1185">Reference proteome</keyword>
<keyword id="KW-0808">Transferase</keyword>
<gene>
    <name evidence="1" type="primary">glgB</name>
    <name type="ordered locus">SynWH7803_0756</name>
</gene>
<comment type="function">
    <text evidence="1">Catalyzes the formation of the alpha-1,6-glucosidic linkages in glycogen by scission of a 1,4-alpha-linked oligosaccharide from growing alpha-1,4-glucan chains and the subsequent attachment of the oligosaccharide to the alpha-1,6 position.</text>
</comment>
<comment type="catalytic activity">
    <reaction evidence="1">
        <text>Transfers a segment of a (1-&gt;4)-alpha-D-glucan chain to a primary hydroxy group in a similar glucan chain.</text>
        <dbReference type="EC" id="2.4.1.18"/>
    </reaction>
</comment>
<comment type="pathway">
    <text evidence="1">Glycan biosynthesis; glycogen biosynthesis.</text>
</comment>
<comment type="subunit">
    <text evidence="1">Monomer.</text>
</comment>
<comment type="similarity">
    <text evidence="1">Belongs to the glycosyl hydrolase 13 family. GlgB subfamily.</text>
</comment>
<name>GLGB_SYNPW</name>
<reference key="1">
    <citation type="submission" date="2006-05" db="EMBL/GenBank/DDBJ databases">
        <authorList>
            <consortium name="Genoscope"/>
        </authorList>
    </citation>
    <scope>NUCLEOTIDE SEQUENCE [LARGE SCALE GENOMIC DNA]</scope>
    <source>
        <strain>WH7803</strain>
    </source>
</reference>
<protein>
    <recommendedName>
        <fullName evidence="1">1,4-alpha-glucan branching enzyme GlgB</fullName>
        <ecNumber evidence="1">2.4.1.18</ecNumber>
    </recommendedName>
    <alternativeName>
        <fullName evidence="1">1,4-alpha-D-glucan:1,4-alpha-D-glucan 6-glucosyl-transferase</fullName>
    </alternativeName>
    <alternativeName>
        <fullName evidence="1">Alpha-(1-&gt;4)-glucan branching enzyme</fullName>
    </alternativeName>
    <alternativeName>
        <fullName evidence="1">Glycogen branching enzyme</fullName>
        <shortName evidence="1">BE</shortName>
    </alternativeName>
</protein>
<organism>
    <name type="scientific">Synechococcus sp. (strain WH7803)</name>
    <dbReference type="NCBI Taxonomy" id="32051"/>
    <lineage>
        <taxon>Bacteria</taxon>
        <taxon>Bacillati</taxon>
        <taxon>Cyanobacteriota</taxon>
        <taxon>Cyanophyceae</taxon>
        <taxon>Synechococcales</taxon>
        <taxon>Synechococcaceae</taxon>
        <taxon>Synechococcus</taxon>
    </lineage>
</organism>
<dbReference type="EC" id="2.4.1.18" evidence="1"/>
<dbReference type="EMBL" id="CT971583">
    <property type="protein sequence ID" value="CAK23182.1"/>
    <property type="molecule type" value="Genomic_DNA"/>
</dbReference>
<dbReference type="SMR" id="A5GJR7"/>
<dbReference type="STRING" id="32051.SynWH7803_0756"/>
<dbReference type="CAZy" id="CBM48">
    <property type="family name" value="Carbohydrate-Binding Module Family 48"/>
</dbReference>
<dbReference type="CAZy" id="GH13">
    <property type="family name" value="Glycoside Hydrolase Family 13"/>
</dbReference>
<dbReference type="KEGG" id="syx:SynWH7803_0756"/>
<dbReference type="eggNOG" id="COG0296">
    <property type="taxonomic scope" value="Bacteria"/>
</dbReference>
<dbReference type="HOGENOM" id="CLU_004245_3_2_3"/>
<dbReference type="OrthoDB" id="9800174at2"/>
<dbReference type="UniPathway" id="UPA00164"/>
<dbReference type="Proteomes" id="UP000001566">
    <property type="component" value="Chromosome"/>
</dbReference>
<dbReference type="GO" id="GO:0005829">
    <property type="term" value="C:cytosol"/>
    <property type="evidence" value="ECO:0007669"/>
    <property type="project" value="TreeGrafter"/>
</dbReference>
<dbReference type="GO" id="GO:0003844">
    <property type="term" value="F:1,4-alpha-glucan branching enzyme activity"/>
    <property type="evidence" value="ECO:0007669"/>
    <property type="project" value="UniProtKB-UniRule"/>
</dbReference>
<dbReference type="GO" id="GO:0043169">
    <property type="term" value="F:cation binding"/>
    <property type="evidence" value="ECO:0007669"/>
    <property type="project" value="InterPro"/>
</dbReference>
<dbReference type="GO" id="GO:0004553">
    <property type="term" value="F:hydrolase activity, hydrolyzing O-glycosyl compounds"/>
    <property type="evidence" value="ECO:0007669"/>
    <property type="project" value="InterPro"/>
</dbReference>
<dbReference type="GO" id="GO:0005978">
    <property type="term" value="P:glycogen biosynthetic process"/>
    <property type="evidence" value="ECO:0007669"/>
    <property type="project" value="UniProtKB-UniRule"/>
</dbReference>
<dbReference type="CDD" id="cd11322">
    <property type="entry name" value="AmyAc_Glg_BE"/>
    <property type="match status" value="1"/>
</dbReference>
<dbReference type="CDD" id="cd02855">
    <property type="entry name" value="E_set_GBE_prok_N"/>
    <property type="match status" value="1"/>
</dbReference>
<dbReference type="FunFam" id="2.60.40.10:FF:000169">
    <property type="entry name" value="1,4-alpha-glucan branching enzyme GlgB"/>
    <property type="match status" value="1"/>
</dbReference>
<dbReference type="FunFam" id="2.60.40.1180:FF:000002">
    <property type="entry name" value="1,4-alpha-glucan branching enzyme GlgB"/>
    <property type="match status" value="1"/>
</dbReference>
<dbReference type="FunFam" id="3.20.20.80:FF:000003">
    <property type="entry name" value="1,4-alpha-glucan branching enzyme GlgB"/>
    <property type="match status" value="1"/>
</dbReference>
<dbReference type="Gene3D" id="3.20.20.80">
    <property type="entry name" value="Glycosidases"/>
    <property type="match status" value="1"/>
</dbReference>
<dbReference type="Gene3D" id="2.60.40.1180">
    <property type="entry name" value="Golgi alpha-mannosidase II"/>
    <property type="match status" value="1"/>
</dbReference>
<dbReference type="Gene3D" id="2.60.40.10">
    <property type="entry name" value="Immunoglobulins"/>
    <property type="match status" value="2"/>
</dbReference>
<dbReference type="HAMAP" id="MF_00685">
    <property type="entry name" value="GlgB"/>
    <property type="match status" value="1"/>
</dbReference>
<dbReference type="InterPro" id="IPR006048">
    <property type="entry name" value="A-amylase/branching_C"/>
</dbReference>
<dbReference type="InterPro" id="IPR037439">
    <property type="entry name" value="Branching_enzy"/>
</dbReference>
<dbReference type="InterPro" id="IPR006407">
    <property type="entry name" value="GlgB"/>
</dbReference>
<dbReference type="InterPro" id="IPR054169">
    <property type="entry name" value="GlgB_N"/>
</dbReference>
<dbReference type="InterPro" id="IPR044143">
    <property type="entry name" value="GlgB_N_E_set_prok"/>
</dbReference>
<dbReference type="InterPro" id="IPR006047">
    <property type="entry name" value="Glyco_hydro_13_cat_dom"/>
</dbReference>
<dbReference type="InterPro" id="IPR004193">
    <property type="entry name" value="Glyco_hydro_13_N"/>
</dbReference>
<dbReference type="InterPro" id="IPR013780">
    <property type="entry name" value="Glyco_hydro_b"/>
</dbReference>
<dbReference type="InterPro" id="IPR017853">
    <property type="entry name" value="Glycoside_hydrolase_SF"/>
</dbReference>
<dbReference type="InterPro" id="IPR013783">
    <property type="entry name" value="Ig-like_fold"/>
</dbReference>
<dbReference type="InterPro" id="IPR014756">
    <property type="entry name" value="Ig_E-set"/>
</dbReference>
<dbReference type="NCBIfam" id="TIGR01515">
    <property type="entry name" value="branching_enzym"/>
    <property type="match status" value="1"/>
</dbReference>
<dbReference type="NCBIfam" id="NF003811">
    <property type="entry name" value="PRK05402.1"/>
    <property type="match status" value="1"/>
</dbReference>
<dbReference type="NCBIfam" id="NF008967">
    <property type="entry name" value="PRK12313.1"/>
    <property type="match status" value="1"/>
</dbReference>
<dbReference type="PANTHER" id="PTHR43651">
    <property type="entry name" value="1,4-ALPHA-GLUCAN-BRANCHING ENZYME"/>
    <property type="match status" value="1"/>
</dbReference>
<dbReference type="PANTHER" id="PTHR43651:SF3">
    <property type="entry name" value="1,4-ALPHA-GLUCAN-BRANCHING ENZYME"/>
    <property type="match status" value="1"/>
</dbReference>
<dbReference type="Pfam" id="PF00128">
    <property type="entry name" value="Alpha-amylase"/>
    <property type="match status" value="2"/>
</dbReference>
<dbReference type="Pfam" id="PF02806">
    <property type="entry name" value="Alpha-amylase_C"/>
    <property type="match status" value="1"/>
</dbReference>
<dbReference type="Pfam" id="PF02922">
    <property type="entry name" value="CBM_48"/>
    <property type="match status" value="1"/>
</dbReference>
<dbReference type="Pfam" id="PF22019">
    <property type="entry name" value="GlgB_N"/>
    <property type="match status" value="1"/>
</dbReference>
<dbReference type="PIRSF" id="PIRSF000463">
    <property type="entry name" value="GlgB"/>
    <property type="match status" value="1"/>
</dbReference>
<dbReference type="SMART" id="SM00642">
    <property type="entry name" value="Aamy"/>
    <property type="match status" value="1"/>
</dbReference>
<dbReference type="SUPFAM" id="SSF51445">
    <property type="entry name" value="(Trans)glycosidases"/>
    <property type="match status" value="1"/>
</dbReference>
<dbReference type="SUPFAM" id="SSF81296">
    <property type="entry name" value="E set domains"/>
    <property type="match status" value="2"/>
</dbReference>
<dbReference type="SUPFAM" id="SSF51011">
    <property type="entry name" value="Glycosyl hydrolase domain"/>
    <property type="match status" value="1"/>
</dbReference>
<accession>A5GJR7</accession>
<evidence type="ECO:0000255" key="1">
    <source>
        <dbReference type="HAMAP-Rule" id="MF_00685"/>
    </source>
</evidence>